<sequence>MERIVVTLGERSYPITIASGLFNEPASFLPLKSGEQVMLVTNETLAPLYLDKVRGVLEQAGVNVDSVILPDGEQYKSLAVLDTVFTALLQKPHGRDTTLVALGGGVVGDLTGFAAASYQRGVRFIQVPTTLLSQVDSSVGGKTAANHPLGKNMIGAFYQPASVVVDLDCLKTLPPRELVSGLAEVIKYGIILDGAFFNWLEENLDALLRLDGPAMAYCIRRCCELKAEVVAADERETGLRALLNLGHTFGHAIEAEMGYGNWLHGEAVAAGMVMAARTSERLGQFSSAETQRIITLLKRAGLPVNGPREMSAQAYLPHMLRDKKVLAGEIRLILPLAIGKSEVRSGVSHELVLNAIADCQSA</sequence>
<protein>
    <recommendedName>
        <fullName evidence="1">3-dehydroquinate synthase</fullName>
        <shortName evidence="1">DHQS</shortName>
        <ecNumber evidence="1">4.2.3.4</ecNumber>
    </recommendedName>
</protein>
<feature type="chain" id="PRO_1000094621" description="3-dehydroquinate synthase">
    <location>
        <begin position="1"/>
        <end position="362"/>
    </location>
</feature>
<feature type="binding site" evidence="1">
    <location>
        <begin position="71"/>
        <end position="76"/>
    </location>
    <ligand>
        <name>NAD(+)</name>
        <dbReference type="ChEBI" id="CHEBI:57540"/>
    </ligand>
</feature>
<feature type="binding site" evidence="1">
    <location>
        <begin position="105"/>
        <end position="109"/>
    </location>
    <ligand>
        <name>NAD(+)</name>
        <dbReference type="ChEBI" id="CHEBI:57540"/>
    </ligand>
</feature>
<feature type="binding site" evidence="1">
    <location>
        <begin position="129"/>
        <end position="130"/>
    </location>
    <ligand>
        <name>NAD(+)</name>
        <dbReference type="ChEBI" id="CHEBI:57540"/>
    </ligand>
</feature>
<feature type="binding site" evidence="1">
    <location>
        <position position="142"/>
    </location>
    <ligand>
        <name>NAD(+)</name>
        <dbReference type="ChEBI" id="CHEBI:57540"/>
    </ligand>
</feature>
<feature type="binding site" evidence="1">
    <location>
        <position position="151"/>
    </location>
    <ligand>
        <name>NAD(+)</name>
        <dbReference type="ChEBI" id="CHEBI:57540"/>
    </ligand>
</feature>
<feature type="binding site" evidence="1">
    <location>
        <begin position="169"/>
        <end position="172"/>
    </location>
    <ligand>
        <name>NAD(+)</name>
        <dbReference type="ChEBI" id="CHEBI:57540"/>
    </ligand>
</feature>
<feature type="binding site" evidence="1">
    <location>
        <position position="184"/>
    </location>
    <ligand>
        <name>Zn(2+)</name>
        <dbReference type="ChEBI" id="CHEBI:29105"/>
    </ligand>
</feature>
<feature type="binding site" evidence="1">
    <location>
        <position position="247"/>
    </location>
    <ligand>
        <name>Zn(2+)</name>
        <dbReference type="ChEBI" id="CHEBI:29105"/>
    </ligand>
</feature>
<feature type="binding site" evidence="1">
    <location>
        <position position="264"/>
    </location>
    <ligand>
        <name>Zn(2+)</name>
        <dbReference type="ChEBI" id="CHEBI:29105"/>
    </ligand>
</feature>
<gene>
    <name evidence="1" type="primary">aroB</name>
    <name type="ordered locus">SbBS512_E3766</name>
</gene>
<evidence type="ECO:0000255" key="1">
    <source>
        <dbReference type="HAMAP-Rule" id="MF_00110"/>
    </source>
</evidence>
<accession>B2U3J5</accession>
<comment type="function">
    <text evidence="1">Catalyzes the conversion of 3-deoxy-D-arabino-heptulosonate 7-phosphate (DAHP) to dehydroquinate (DHQ).</text>
</comment>
<comment type="catalytic activity">
    <reaction evidence="1">
        <text>7-phospho-2-dehydro-3-deoxy-D-arabino-heptonate = 3-dehydroquinate + phosphate</text>
        <dbReference type="Rhea" id="RHEA:21968"/>
        <dbReference type="ChEBI" id="CHEBI:32364"/>
        <dbReference type="ChEBI" id="CHEBI:43474"/>
        <dbReference type="ChEBI" id="CHEBI:58394"/>
        <dbReference type="EC" id="4.2.3.4"/>
    </reaction>
</comment>
<comment type="cofactor">
    <cofactor evidence="1">
        <name>Co(2+)</name>
        <dbReference type="ChEBI" id="CHEBI:48828"/>
    </cofactor>
    <cofactor evidence="1">
        <name>Zn(2+)</name>
        <dbReference type="ChEBI" id="CHEBI:29105"/>
    </cofactor>
    <text evidence="1">Binds 1 divalent metal cation per subunit. Can use either Co(2+) or Zn(2+).</text>
</comment>
<comment type="cofactor">
    <cofactor evidence="1">
        <name>NAD(+)</name>
        <dbReference type="ChEBI" id="CHEBI:57540"/>
    </cofactor>
</comment>
<comment type="pathway">
    <text evidence="1">Metabolic intermediate biosynthesis; chorismate biosynthesis; chorismate from D-erythrose 4-phosphate and phosphoenolpyruvate: step 2/7.</text>
</comment>
<comment type="subcellular location">
    <subcellularLocation>
        <location evidence="1">Cytoplasm</location>
    </subcellularLocation>
</comment>
<comment type="similarity">
    <text evidence="1">Belongs to the sugar phosphate cyclases superfamily. Dehydroquinate synthase family.</text>
</comment>
<name>AROB_SHIB3</name>
<organism>
    <name type="scientific">Shigella boydii serotype 18 (strain CDC 3083-94 / BS512)</name>
    <dbReference type="NCBI Taxonomy" id="344609"/>
    <lineage>
        <taxon>Bacteria</taxon>
        <taxon>Pseudomonadati</taxon>
        <taxon>Pseudomonadota</taxon>
        <taxon>Gammaproteobacteria</taxon>
        <taxon>Enterobacterales</taxon>
        <taxon>Enterobacteriaceae</taxon>
        <taxon>Shigella</taxon>
    </lineage>
</organism>
<proteinExistence type="inferred from homology"/>
<keyword id="KW-0028">Amino-acid biosynthesis</keyword>
<keyword id="KW-0057">Aromatic amino acid biosynthesis</keyword>
<keyword id="KW-0170">Cobalt</keyword>
<keyword id="KW-0963">Cytoplasm</keyword>
<keyword id="KW-0456">Lyase</keyword>
<keyword id="KW-0479">Metal-binding</keyword>
<keyword id="KW-0520">NAD</keyword>
<keyword id="KW-0547">Nucleotide-binding</keyword>
<keyword id="KW-1185">Reference proteome</keyword>
<keyword id="KW-0862">Zinc</keyword>
<reference key="1">
    <citation type="submission" date="2008-05" db="EMBL/GenBank/DDBJ databases">
        <title>Complete sequence of Shigella boydii serotype 18 strain BS512.</title>
        <authorList>
            <person name="Rasko D.A."/>
            <person name="Rosovitz M."/>
            <person name="Maurelli A.T."/>
            <person name="Myers G."/>
            <person name="Seshadri R."/>
            <person name="Cer R."/>
            <person name="Jiang L."/>
            <person name="Ravel J."/>
            <person name="Sebastian Y."/>
        </authorList>
    </citation>
    <scope>NUCLEOTIDE SEQUENCE [LARGE SCALE GENOMIC DNA]</scope>
    <source>
        <strain>CDC 3083-94 / BS512</strain>
    </source>
</reference>
<dbReference type="EC" id="4.2.3.4" evidence="1"/>
<dbReference type="EMBL" id="CP001063">
    <property type="protein sequence ID" value="ACD08071.1"/>
    <property type="molecule type" value="Genomic_DNA"/>
</dbReference>
<dbReference type="RefSeq" id="WP_000439838.1">
    <property type="nucleotide sequence ID" value="NC_010658.1"/>
</dbReference>
<dbReference type="SMR" id="B2U3J5"/>
<dbReference type="STRING" id="344609.SbBS512_E3766"/>
<dbReference type="KEGG" id="sbc:SbBS512_E3766"/>
<dbReference type="HOGENOM" id="CLU_001201_0_2_6"/>
<dbReference type="UniPathway" id="UPA00053">
    <property type="reaction ID" value="UER00085"/>
</dbReference>
<dbReference type="Proteomes" id="UP000001030">
    <property type="component" value="Chromosome"/>
</dbReference>
<dbReference type="GO" id="GO:0005737">
    <property type="term" value="C:cytoplasm"/>
    <property type="evidence" value="ECO:0007669"/>
    <property type="project" value="UniProtKB-SubCell"/>
</dbReference>
<dbReference type="GO" id="GO:0003856">
    <property type="term" value="F:3-dehydroquinate synthase activity"/>
    <property type="evidence" value="ECO:0007669"/>
    <property type="project" value="UniProtKB-UniRule"/>
</dbReference>
<dbReference type="GO" id="GO:0046872">
    <property type="term" value="F:metal ion binding"/>
    <property type="evidence" value="ECO:0007669"/>
    <property type="project" value="UniProtKB-KW"/>
</dbReference>
<dbReference type="GO" id="GO:0000166">
    <property type="term" value="F:nucleotide binding"/>
    <property type="evidence" value="ECO:0007669"/>
    <property type="project" value="UniProtKB-KW"/>
</dbReference>
<dbReference type="GO" id="GO:0008652">
    <property type="term" value="P:amino acid biosynthetic process"/>
    <property type="evidence" value="ECO:0007669"/>
    <property type="project" value="UniProtKB-KW"/>
</dbReference>
<dbReference type="GO" id="GO:0009073">
    <property type="term" value="P:aromatic amino acid family biosynthetic process"/>
    <property type="evidence" value="ECO:0007669"/>
    <property type="project" value="UniProtKB-KW"/>
</dbReference>
<dbReference type="GO" id="GO:0009423">
    <property type="term" value="P:chorismate biosynthetic process"/>
    <property type="evidence" value="ECO:0007669"/>
    <property type="project" value="UniProtKB-UniRule"/>
</dbReference>
<dbReference type="CDD" id="cd08195">
    <property type="entry name" value="DHQS"/>
    <property type="match status" value="1"/>
</dbReference>
<dbReference type="FunFam" id="1.20.1090.10:FF:000002">
    <property type="entry name" value="3-dehydroquinate synthase"/>
    <property type="match status" value="1"/>
</dbReference>
<dbReference type="FunFam" id="3.40.50.1970:FF:000001">
    <property type="entry name" value="3-dehydroquinate synthase"/>
    <property type="match status" value="1"/>
</dbReference>
<dbReference type="Gene3D" id="3.40.50.1970">
    <property type="match status" value="1"/>
</dbReference>
<dbReference type="Gene3D" id="1.20.1090.10">
    <property type="entry name" value="Dehydroquinate synthase-like - alpha domain"/>
    <property type="match status" value="1"/>
</dbReference>
<dbReference type="HAMAP" id="MF_00110">
    <property type="entry name" value="DHQ_synthase"/>
    <property type="match status" value="1"/>
</dbReference>
<dbReference type="InterPro" id="IPR050071">
    <property type="entry name" value="Dehydroquinate_synthase"/>
</dbReference>
<dbReference type="InterPro" id="IPR016037">
    <property type="entry name" value="DHQ_synth_AroB"/>
</dbReference>
<dbReference type="InterPro" id="IPR030963">
    <property type="entry name" value="DHQ_synth_fam"/>
</dbReference>
<dbReference type="InterPro" id="IPR030960">
    <property type="entry name" value="DHQS/DOIS_N"/>
</dbReference>
<dbReference type="InterPro" id="IPR056179">
    <property type="entry name" value="DHQS_C"/>
</dbReference>
<dbReference type="NCBIfam" id="TIGR01357">
    <property type="entry name" value="aroB"/>
    <property type="match status" value="1"/>
</dbReference>
<dbReference type="PANTHER" id="PTHR43622">
    <property type="entry name" value="3-DEHYDROQUINATE SYNTHASE"/>
    <property type="match status" value="1"/>
</dbReference>
<dbReference type="PANTHER" id="PTHR43622:SF7">
    <property type="entry name" value="3-DEHYDROQUINATE SYNTHASE, CHLOROPLASTIC"/>
    <property type="match status" value="1"/>
</dbReference>
<dbReference type="Pfam" id="PF01761">
    <property type="entry name" value="DHQ_synthase"/>
    <property type="match status" value="1"/>
</dbReference>
<dbReference type="Pfam" id="PF24621">
    <property type="entry name" value="DHQS_C"/>
    <property type="match status" value="1"/>
</dbReference>
<dbReference type="PIRSF" id="PIRSF001455">
    <property type="entry name" value="DHQ_synth"/>
    <property type="match status" value="1"/>
</dbReference>
<dbReference type="SUPFAM" id="SSF56796">
    <property type="entry name" value="Dehydroquinate synthase-like"/>
    <property type="match status" value="1"/>
</dbReference>